<dbReference type="EMBL" id="AF405542">
    <property type="protein sequence ID" value="AAK92015.1"/>
    <property type="status" value="ALT_INIT"/>
    <property type="molecule type" value="Genomic_DNA"/>
</dbReference>
<dbReference type="RefSeq" id="WP_003857459.1">
    <property type="nucleotide sequence ID" value="NZ_PEHU01000016.1"/>
</dbReference>
<dbReference type="GeneID" id="93199540"/>
<dbReference type="KEGG" id="ecli:ECNIH5_09735"/>
<dbReference type="GO" id="GO:0042597">
    <property type="term" value="C:periplasmic space"/>
    <property type="evidence" value="ECO:0007669"/>
    <property type="project" value="UniProtKB-SubCell"/>
</dbReference>
<dbReference type="HAMAP" id="MF_00546">
    <property type="entry name" value="Asr"/>
    <property type="match status" value="1"/>
</dbReference>
<dbReference type="InterPro" id="IPR023497">
    <property type="entry name" value="Acid_shock"/>
</dbReference>
<dbReference type="NCBIfam" id="NF033636">
    <property type="entry name" value="acid_shock_Asr"/>
    <property type="match status" value="1"/>
</dbReference>
<dbReference type="Pfam" id="PF06392">
    <property type="entry name" value="Asr"/>
    <property type="match status" value="1"/>
</dbReference>
<feature type="signal peptide" evidence="1">
    <location>
        <begin position="1"/>
        <end position="21"/>
    </location>
</feature>
<feature type="propeptide" id="PRO_0000269506" evidence="1">
    <location>
        <begin position="22"/>
        <end position="59"/>
    </location>
</feature>
<feature type="chain" id="PRO_0000002405" description="Acid shock protein">
    <location>
        <begin position="60"/>
        <end position="101"/>
    </location>
</feature>
<feature type="region of interest" description="Disordered" evidence="2">
    <location>
        <begin position="26"/>
        <end position="101"/>
    </location>
</feature>
<feature type="compositionally biased region" description="Low complexity" evidence="2">
    <location>
        <begin position="26"/>
        <end position="39"/>
    </location>
</feature>
<feature type="compositionally biased region" description="Basic residues" evidence="2">
    <location>
        <begin position="40"/>
        <end position="50"/>
    </location>
</feature>
<feature type="compositionally biased region" description="Basic residues" evidence="2">
    <location>
        <begin position="60"/>
        <end position="69"/>
    </location>
</feature>
<feature type="compositionally biased region" description="Basic residues" evidence="2">
    <location>
        <begin position="79"/>
        <end position="88"/>
    </location>
</feature>
<name>ASR_ENTCL</name>
<reference key="1">
    <citation type="journal article" date="2003" name="J. Bacteriol.">
        <title>Molecular characterization of the acid-inducible asr gene of Escherichia coli and its role in acid stress response.</title>
        <authorList>
            <person name="Seputiene V."/>
            <person name="Motiejunas D."/>
            <person name="Suziedelis K."/>
            <person name="Tomenius H."/>
            <person name="Normark S."/>
            <person name="Melefors O."/>
            <person name="Suziedeliene E."/>
        </authorList>
    </citation>
    <scope>NUCLEOTIDE SEQUENCE [GENOMIC DNA]</scope>
</reference>
<keyword id="KW-0574">Periplasm</keyword>
<keyword id="KW-0732">Signal</keyword>
<sequence length="101" mass="10254">MKKVLALVVAAAMGLSSAAFAAETTATAAPAASTAAPAKTVHHKKHHKAAKPAAEQKAQAAKKHHKKAAKPAVEQKAQAAKKHHKKAAKHEAAKPAAQPAA</sequence>
<gene>
    <name type="primary">asr</name>
</gene>
<organism>
    <name type="scientific">Enterobacter cloacae</name>
    <dbReference type="NCBI Taxonomy" id="550"/>
    <lineage>
        <taxon>Bacteria</taxon>
        <taxon>Pseudomonadati</taxon>
        <taxon>Pseudomonadota</taxon>
        <taxon>Gammaproteobacteria</taxon>
        <taxon>Enterobacterales</taxon>
        <taxon>Enterobacteriaceae</taxon>
        <taxon>Enterobacter</taxon>
        <taxon>Enterobacter cloacae complex</taxon>
    </lineage>
</organism>
<evidence type="ECO:0000250" key="1"/>
<evidence type="ECO:0000256" key="2">
    <source>
        <dbReference type="SAM" id="MobiDB-lite"/>
    </source>
</evidence>
<evidence type="ECO:0000305" key="3"/>
<comment type="function">
    <text evidence="1">Required for growth and/or survival at acidic conditions.</text>
</comment>
<comment type="subcellular location">
    <subcellularLocation>
        <location evidence="1">Periplasm</location>
    </subcellularLocation>
</comment>
<comment type="PTM">
    <text evidence="1">Proteolytic processing gives rise to the active protein.</text>
</comment>
<comment type="similarity">
    <text evidence="3">Belongs to the Asr family.</text>
</comment>
<comment type="sequence caution" evidence="3">
    <conflict type="erroneous initiation">
        <sequence resource="EMBL-CDS" id="AAK92015"/>
    </conflict>
</comment>
<protein>
    <recommendedName>
        <fullName>Acid shock protein</fullName>
    </recommendedName>
</protein>
<accession>Q93MH6</accession>
<proteinExistence type="inferred from homology"/>